<name>RF3_STRM5</name>
<dbReference type="EMBL" id="CP001111">
    <property type="protein sequence ID" value="ACF52752.1"/>
    <property type="molecule type" value="Genomic_DNA"/>
</dbReference>
<dbReference type="RefSeq" id="WP_006384729.1">
    <property type="nucleotide sequence ID" value="NC_011071.1"/>
</dbReference>
<dbReference type="SMR" id="B4SSC0"/>
<dbReference type="STRING" id="391008.Smal_3053"/>
<dbReference type="KEGG" id="smt:Smal_3053"/>
<dbReference type="eggNOG" id="COG4108">
    <property type="taxonomic scope" value="Bacteria"/>
</dbReference>
<dbReference type="HOGENOM" id="CLU_002794_2_1_6"/>
<dbReference type="OrthoDB" id="9804431at2"/>
<dbReference type="Proteomes" id="UP000001867">
    <property type="component" value="Chromosome"/>
</dbReference>
<dbReference type="GO" id="GO:0005829">
    <property type="term" value="C:cytosol"/>
    <property type="evidence" value="ECO:0007669"/>
    <property type="project" value="TreeGrafter"/>
</dbReference>
<dbReference type="GO" id="GO:0005525">
    <property type="term" value="F:GTP binding"/>
    <property type="evidence" value="ECO:0007669"/>
    <property type="project" value="UniProtKB-UniRule"/>
</dbReference>
<dbReference type="GO" id="GO:0003924">
    <property type="term" value="F:GTPase activity"/>
    <property type="evidence" value="ECO:0007669"/>
    <property type="project" value="InterPro"/>
</dbReference>
<dbReference type="GO" id="GO:0097216">
    <property type="term" value="F:guanosine tetraphosphate binding"/>
    <property type="evidence" value="ECO:0007669"/>
    <property type="project" value="UniProtKB-ARBA"/>
</dbReference>
<dbReference type="GO" id="GO:0016150">
    <property type="term" value="F:translation release factor activity, codon nonspecific"/>
    <property type="evidence" value="ECO:0007669"/>
    <property type="project" value="TreeGrafter"/>
</dbReference>
<dbReference type="GO" id="GO:0016149">
    <property type="term" value="F:translation release factor activity, codon specific"/>
    <property type="evidence" value="ECO:0007669"/>
    <property type="project" value="UniProtKB-UniRule"/>
</dbReference>
<dbReference type="GO" id="GO:0006449">
    <property type="term" value="P:regulation of translational termination"/>
    <property type="evidence" value="ECO:0007669"/>
    <property type="project" value="UniProtKB-UniRule"/>
</dbReference>
<dbReference type="CDD" id="cd04169">
    <property type="entry name" value="RF3"/>
    <property type="match status" value="1"/>
</dbReference>
<dbReference type="CDD" id="cd03689">
    <property type="entry name" value="RF3_II"/>
    <property type="match status" value="1"/>
</dbReference>
<dbReference type="CDD" id="cd16259">
    <property type="entry name" value="RF3_III"/>
    <property type="match status" value="1"/>
</dbReference>
<dbReference type="FunFam" id="2.40.30.10:FF:000040">
    <property type="entry name" value="Peptide chain release factor 3"/>
    <property type="match status" value="1"/>
</dbReference>
<dbReference type="FunFam" id="3.30.70.3280:FF:000001">
    <property type="entry name" value="Peptide chain release factor 3"/>
    <property type="match status" value="1"/>
</dbReference>
<dbReference type="FunFam" id="3.40.50.300:FF:000542">
    <property type="entry name" value="Peptide chain release factor 3"/>
    <property type="match status" value="1"/>
</dbReference>
<dbReference type="Gene3D" id="3.40.50.300">
    <property type="entry name" value="P-loop containing nucleotide triphosphate hydrolases"/>
    <property type="match status" value="2"/>
</dbReference>
<dbReference type="Gene3D" id="3.30.70.3280">
    <property type="entry name" value="Peptide chain release factor 3, domain III"/>
    <property type="match status" value="1"/>
</dbReference>
<dbReference type="HAMAP" id="MF_00072">
    <property type="entry name" value="Rel_fac_3"/>
    <property type="match status" value="1"/>
</dbReference>
<dbReference type="InterPro" id="IPR053905">
    <property type="entry name" value="EF-G-like_DII"/>
</dbReference>
<dbReference type="InterPro" id="IPR035647">
    <property type="entry name" value="EFG_III/V"/>
</dbReference>
<dbReference type="InterPro" id="IPR031157">
    <property type="entry name" value="G_TR_CS"/>
</dbReference>
<dbReference type="InterPro" id="IPR027417">
    <property type="entry name" value="P-loop_NTPase"/>
</dbReference>
<dbReference type="InterPro" id="IPR004548">
    <property type="entry name" value="PrfC"/>
</dbReference>
<dbReference type="InterPro" id="IPR032090">
    <property type="entry name" value="RF3_C"/>
</dbReference>
<dbReference type="InterPro" id="IPR038467">
    <property type="entry name" value="RF3_dom_3_sf"/>
</dbReference>
<dbReference type="InterPro" id="IPR041732">
    <property type="entry name" value="RF3_GTP-bd"/>
</dbReference>
<dbReference type="InterPro" id="IPR005225">
    <property type="entry name" value="Small_GTP-bd"/>
</dbReference>
<dbReference type="InterPro" id="IPR000795">
    <property type="entry name" value="T_Tr_GTP-bd_dom"/>
</dbReference>
<dbReference type="InterPro" id="IPR009000">
    <property type="entry name" value="Transl_B-barrel_sf"/>
</dbReference>
<dbReference type="NCBIfam" id="TIGR00503">
    <property type="entry name" value="prfC"/>
    <property type="match status" value="1"/>
</dbReference>
<dbReference type="NCBIfam" id="NF001964">
    <property type="entry name" value="PRK00741.1"/>
    <property type="match status" value="1"/>
</dbReference>
<dbReference type="NCBIfam" id="TIGR00231">
    <property type="entry name" value="small_GTP"/>
    <property type="match status" value="1"/>
</dbReference>
<dbReference type="PANTHER" id="PTHR43556">
    <property type="entry name" value="PEPTIDE CHAIN RELEASE FACTOR RF3"/>
    <property type="match status" value="1"/>
</dbReference>
<dbReference type="PANTHER" id="PTHR43556:SF2">
    <property type="entry name" value="PEPTIDE CHAIN RELEASE FACTOR RF3"/>
    <property type="match status" value="1"/>
</dbReference>
<dbReference type="Pfam" id="PF22042">
    <property type="entry name" value="EF-G_D2"/>
    <property type="match status" value="1"/>
</dbReference>
<dbReference type="Pfam" id="PF00009">
    <property type="entry name" value="GTP_EFTU"/>
    <property type="match status" value="1"/>
</dbReference>
<dbReference type="Pfam" id="PF16658">
    <property type="entry name" value="RF3_C"/>
    <property type="match status" value="1"/>
</dbReference>
<dbReference type="PRINTS" id="PR00315">
    <property type="entry name" value="ELONGATNFCT"/>
</dbReference>
<dbReference type="SUPFAM" id="SSF54980">
    <property type="entry name" value="EF-G C-terminal domain-like"/>
    <property type="match status" value="1"/>
</dbReference>
<dbReference type="SUPFAM" id="SSF52540">
    <property type="entry name" value="P-loop containing nucleoside triphosphate hydrolases"/>
    <property type="match status" value="1"/>
</dbReference>
<dbReference type="SUPFAM" id="SSF50447">
    <property type="entry name" value="Translation proteins"/>
    <property type="match status" value="1"/>
</dbReference>
<dbReference type="PROSITE" id="PS00301">
    <property type="entry name" value="G_TR_1"/>
    <property type="match status" value="1"/>
</dbReference>
<dbReference type="PROSITE" id="PS51722">
    <property type="entry name" value="G_TR_2"/>
    <property type="match status" value="1"/>
</dbReference>
<evidence type="ECO:0000255" key="1">
    <source>
        <dbReference type="HAMAP-Rule" id="MF_00072"/>
    </source>
</evidence>
<protein>
    <recommendedName>
        <fullName evidence="1">Peptide chain release factor 3</fullName>
        <shortName evidence="1">RF-3</shortName>
    </recommendedName>
</protein>
<feature type="chain" id="PRO_1000092503" description="Peptide chain release factor 3">
    <location>
        <begin position="1"/>
        <end position="534"/>
    </location>
</feature>
<feature type="domain" description="tr-type G">
    <location>
        <begin position="9"/>
        <end position="278"/>
    </location>
</feature>
<feature type="binding site" evidence="1">
    <location>
        <begin position="18"/>
        <end position="25"/>
    </location>
    <ligand>
        <name>GTP</name>
        <dbReference type="ChEBI" id="CHEBI:37565"/>
    </ligand>
</feature>
<feature type="binding site" evidence="1">
    <location>
        <begin position="86"/>
        <end position="90"/>
    </location>
    <ligand>
        <name>GTP</name>
        <dbReference type="ChEBI" id="CHEBI:37565"/>
    </ligand>
</feature>
<feature type="binding site" evidence="1">
    <location>
        <begin position="140"/>
        <end position="143"/>
    </location>
    <ligand>
        <name>GTP</name>
        <dbReference type="ChEBI" id="CHEBI:37565"/>
    </ligand>
</feature>
<proteinExistence type="inferred from homology"/>
<accession>B4SSC0</accession>
<reference key="1">
    <citation type="submission" date="2008-06" db="EMBL/GenBank/DDBJ databases">
        <title>Complete sequence of Stenotrophomonas maltophilia R551-3.</title>
        <authorList>
            <consortium name="US DOE Joint Genome Institute"/>
            <person name="Lucas S."/>
            <person name="Copeland A."/>
            <person name="Lapidus A."/>
            <person name="Glavina del Rio T."/>
            <person name="Dalin E."/>
            <person name="Tice H."/>
            <person name="Pitluck S."/>
            <person name="Chain P."/>
            <person name="Malfatti S."/>
            <person name="Shin M."/>
            <person name="Vergez L."/>
            <person name="Lang D."/>
            <person name="Schmutz J."/>
            <person name="Larimer F."/>
            <person name="Land M."/>
            <person name="Hauser L."/>
            <person name="Kyrpides N."/>
            <person name="Mikhailova N."/>
            <person name="Taghavi S."/>
            <person name="Monchy S."/>
            <person name="Newman L."/>
            <person name="Vangronsveld J."/>
            <person name="van der Lelie D."/>
            <person name="Richardson P."/>
        </authorList>
    </citation>
    <scope>NUCLEOTIDE SEQUENCE [LARGE SCALE GENOMIC DNA]</scope>
    <source>
        <strain>R551-3</strain>
    </source>
</reference>
<keyword id="KW-0963">Cytoplasm</keyword>
<keyword id="KW-0342">GTP-binding</keyword>
<keyword id="KW-0547">Nucleotide-binding</keyword>
<keyword id="KW-0648">Protein biosynthesis</keyword>
<sequence length="534" mass="58878">MSEVANEASRRRTFAIISHPDAGKTTLTEKLLLFGGAIQMAGSVKGRKAARHATSDWMALEKERGISVTSSVMQFPYEGKIVNLLDTPGHADFGEDTYRVLTAVDSALMVIDVAKGVEERTIKLMEVCRLRDTPIMTFINKLDREGKDPIELLDEVETVLGIQCAPVTWPIGMGQRLKGVVHLLTGEVHLYEPGRNFTRQDSTIFPSIDAPGLAEKIGAQMLAELRDELDLVQGASHPFDLDAYRAGKQTPVFFGSGVNNFGVQPLLDFFVEHAPPPQARTTTGRVIAPEENKLTGFVFKIQANMDPQHRDRVAFMRICSGRFSAGMKTFHVRTGKDMKLANALTFMASDREIAAEAWPGDVIGIHNHGTISIGDTFTEGEAVTFTGIPNFAPELFRRARLRDPLKLKQLQKGLAQLSEEGATQFFRPLTSNDLILGAVGVLQFDVAAYRLKDEYGVEATFEQVSVSTARWVHCSNEKKLEEFREKNALNLALDAAGHLVYLAPTRVNLQLAQERSPDVRFSATREAAHTVSVG</sequence>
<gene>
    <name evidence="1" type="primary">prfC</name>
    <name type="ordered locus">Smal_3053</name>
</gene>
<comment type="function">
    <text evidence="1">Increases the formation of ribosomal termination complexes and stimulates activities of RF-1 and RF-2. It binds guanine nucleotides and has strong preference for UGA stop codons. It may interact directly with the ribosome. The stimulation of RF-1 and RF-2 is significantly reduced by GTP and GDP, but not by GMP.</text>
</comment>
<comment type="subcellular location">
    <subcellularLocation>
        <location evidence="1">Cytoplasm</location>
    </subcellularLocation>
</comment>
<comment type="similarity">
    <text evidence="1">Belongs to the TRAFAC class translation factor GTPase superfamily. Classic translation factor GTPase family. PrfC subfamily.</text>
</comment>
<organism>
    <name type="scientific">Stenotrophomonas maltophilia (strain R551-3)</name>
    <dbReference type="NCBI Taxonomy" id="391008"/>
    <lineage>
        <taxon>Bacteria</taxon>
        <taxon>Pseudomonadati</taxon>
        <taxon>Pseudomonadota</taxon>
        <taxon>Gammaproteobacteria</taxon>
        <taxon>Lysobacterales</taxon>
        <taxon>Lysobacteraceae</taxon>
        <taxon>Stenotrophomonas</taxon>
        <taxon>Stenotrophomonas maltophilia group</taxon>
    </lineage>
</organism>